<reference key="1">
    <citation type="journal article" date="1998" name="J. Biochem.">
        <title>Purification and characterization of a puromycin-hydrolyzing enzyme from blasticidin S-producing Streptomyces morookaensis.</title>
        <authorList>
            <person name="Nishimura M."/>
            <person name="Matsuo H."/>
            <person name="Nakamura A."/>
            <person name="Sugiyama M."/>
        </authorList>
    </citation>
    <scope>PROTEIN SEQUENCE</scope>
    <source>
        <strain>ATCC 19166 / DSM 40503 / JCM 4673 / KCC S-0673 / NBRC 13416 / NRRL B-12429 / VKM Ac-1916</strain>
    </source>
</reference>
<reference key="2">
    <citation type="journal article" date="1995" name="FEMS Microbiol. Lett.">
        <title>Blasticidin S-producing Streptomyces morookaensis possesses an enzyme activity with hydrolyzes puromycin.</title>
        <authorList>
            <person name="Nishimura M."/>
            <person name="Matsuo H."/>
            <person name="Sugiyama M."/>
        </authorList>
    </citation>
    <scope>CHARACTERIZATION</scope>
    <scope>FUNCTION</scope>
</reference>
<name>PHE_STRMO</name>
<comment type="function">
    <text evidence="1">Inactivates puromycin by catalyzing the hydrolysis of the amide linkage between its aminonucleoside and O-methyl-L-tyrosine moieties. May have aminopeptidase activity.</text>
</comment>
<comment type="activity regulation">
    <text>Stimulated by DTT. Strongly inhibited by zinc ion, Fe(2+) ion, Cu(2+) ion, mercury ion, N-bromosuccinimide and N-ethylmaleimide. Partially inhibited by cobalt ion.</text>
</comment>
<comment type="biophysicochemical properties">
    <phDependence>
        <text>Optimum pH is 8.0.</text>
    </phDependence>
    <temperatureDependence>
        <text>Optimum temperature is 45 degrees Celsius.</text>
    </temperatureDependence>
</comment>
<comment type="subunit">
    <text>Monomer.</text>
</comment>
<keyword id="KW-0031">Aminopeptidase</keyword>
<keyword id="KW-0903">Direct protein sequencing</keyword>
<keyword id="KW-0378">Hydrolase</keyword>
<keyword id="KW-0645">Protease</keyword>
<sequence>VSTAPYGAWQSPID</sequence>
<proteinExistence type="evidence at protein level"/>
<accession>P81801</accession>
<evidence type="ECO:0000269" key="1">
    <source ref="2"/>
</evidence>
<organism>
    <name type="scientific">Streptomyces morookaense</name>
    <name type="common">Streptoverticillium morookaense</name>
    <dbReference type="NCBI Taxonomy" id="1970"/>
    <lineage>
        <taxon>Bacteria</taxon>
        <taxon>Bacillati</taxon>
        <taxon>Actinomycetota</taxon>
        <taxon>Actinomycetes</taxon>
        <taxon>Kitasatosporales</taxon>
        <taxon>Streptomycetaceae</taxon>
        <taxon>Streptomyces</taxon>
    </lineage>
</organism>
<protein>
    <recommendedName>
        <fullName>Puromycin-hydrolyzing enzyme</fullName>
        <ecNumber>3.-.-.-</ecNumber>
    </recommendedName>
</protein>
<dbReference type="EC" id="3.-.-.-"/>
<dbReference type="GO" id="GO:0004177">
    <property type="term" value="F:aminopeptidase activity"/>
    <property type="evidence" value="ECO:0007669"/>
    <property type="project" value="UniProtKB-KW"/>
</dbReference>
<dbReference type="GO" id="GO:0006508">
    <property type="term" value="P:proteolysis"/>
    <property type="evidence" value="ECO:0007669"/>
    <property type="project" value="UniProtKB-KW"/>
</dbReference>
<feature type="chain" id="PRO_0000058378" description="Puromycin-hydrolyzing enzyme">
    <location>
        <begin position="1"/>
        <end position="14" status="greater than"/>
    </location>
</feature>
<feature type="non-terminal residue">
    <location>
        <position position="14"/>
    </location>
</feature>